<feature type="chain" id="PRO_0000143818" description="Maternal B9.15 protein">
    <location>
        <begin position="1"/>
        <end position="233"/>
    </location>
</feature>
<feature type="region of interest" description="Disordered" evidence="1">
    <location>
        <begin position="135"/>
        <end position="165"/>
    </location>
</feature>
<comment type="similarity">
    <text evidence="2">Belongs to the BTG family.</text>
</comment>
<reference key="1">
    <citation type="submission" date="1993-06" db="EMBL/GenBank/DDBJ databases">
        <title>Ablation of maternal mRNA encoding a growth-related protein (B9) causes cleavage arrest in Xenopus embryos.</title>
        <authorList>
            <person name="Keiper B.D."/>
            <person name="Dworkin-Rastl E."/>
        </authorList>
    </citation>
    <scope>NUCLEOTIDE SEQUENCE [MRNA]</scope>
    <source>
        <tissue>Ovary</tissue>
    </source>
</reference>
<reference key="2">
    <citation type="submission" date="2004-12" db="EMBL/GenBank/DDBJ databases">
        <authorList>
            <consortium name="NIH - Xenopus Gene Collection (XGC) project"/>
        </authorList>
    </citation>
    <scope>NUCLEOTIDE SEQUENCE [LARGE SCALE MRNA]</scope>
    <source>
        <tissue>Egg</tissue>
    </source>
</reference>
<accession>P40745</accession>
<accession>Q5M785</accession>
<evidence type="ECO:0000256" key="1">
    <source>
        <dbReference type="SAM" id="MobiDB-lite"/>
    </source>
</evidence>
<evidence type="ECO:0000305" key="2"/>
<organism>
    <name type="scientific">Xenopus laevis</name>
    <name type="common">African clawed frog</name>
    <dbReference type="NCBI Taxonomy" id="8355"/>
    <lineage>
        <taxon>Eukaryota</taxon>
        <taxon>Metazoa</taxon>
        <taxon>Chordata</taxon>
        <taxon>Craniata</taxon>
        <taxon>Vertebrata</taxon>
        <taxon>Euteleostomi</taxon>
        <taxon>Amphibia</taxon>
        <taxon>Batrachia</taxon>
        <taxon>Anura</taxon>
        <taxon>Pipoidea</taxon>
        <taxon>Pipidae</taxon>
        <taxon>Xenopodinae</taxon>
        <taxon>Xenopus</taxon>
        <taxon>Xenopus</taxon>
    </lineage>
</organism>
<protein>
    <recommendedName>
        <fullName>Maternal B9.15 protein</fullName>
    </recommendedName>
    <alternativeName>
        <fullName>p30 B9.15</fullName>
    </alternativeName>
</protein>
<dbReference type="EMBL" id="X73316">
    <property type="protein sequence ID" value="CAA51746.1"/>
    <property type="molecule type" value="mRNA"/>
</dbReference>
<dbReference type="EMBL" id="BC088789">
    <property type="protein sequence ID" value="AAH88789.1"/>
    <property type="molecule type" value="mRNA"/>
</dbReference>
<dbReference type="PIR" id="S47352">
    <property type="entry name" value="S47352"/>
</dbReference>
<dbReference type="RefSeq" id="NP_001081549.1">
    <property type="nucleotide sequence ID" value="NM_001088080.1"/>
</dbReference>
<dbReference type="SMR" id="P40745"/>
<dbReference type="DNASU" id="397913"/>
<dbReference type="GeneID" id="397913"/>
<dbReference type="KEGG" id="xla:397913"/>
<dbReference type="AGR" id="Xenbase:XB-GENE-941943"/>
<dbReference type="CTD" id="397913"/>
<dbReference type="Xenbase" id="XB-GENE-941943">
    <property type="gene designation" value="btg4.S"/>
</dbReference>
<dbReference type="OMA" id="HTIARFD"/>
<dbReference type="OrthoDB" id="19928at2759"/>
<dbReference type="Proteomes" id="UP000186698">
    <property type="component" value="Chromosome 7S"/>
</dbReference>
<dbReference type="Bgee" id="397913">
    <property type="expression patterns" value="Expressed in egg cell and 11 other cell types or tissues"/>
</dbReference>
<dbReference type="GO" id="GO:0005737">
    <property type="term" value="C:cytoplasm"/>
    <property type="evidence" value="ECO:0000318"/>
    <property type="project" value="GO_Central"/>
</dbReference>
<dbReference type="GO" id="GO:0005634">
    <property type="term" value="C:nucleus"/>
    <property type="evidence" value="ECO:0000318"/>
    <property type="project" value="GO_Central"/>
</dbReference>
<dbReference type="FunFam" id="3.90.640.90:FF:000002">
    <property type="entry name" value="BTG anti-proliferation factor 4"/>
    <property type="match status" value="1"/>
</dbReference>
<dbReference type="Gene3D" id="3.90.640.90">
    <property type="entry name" value="Anti-proliferative protein, N-terminal domain"/>
    <property type="match status" value="1"/>
</dbReference>
<dbReference type="InterPro" id="IPR002087">
    <property type="entry name" value="Anti_prolifrtn"/>
</dbReference>
<dbReference type="InterPro" id="IPR033332">
    <property type="entry name" value="BTG"/>
</dbReference>
<dbReference type="InterPro" id="IPR036054">
    <property type="entry name" value="BTG-like_sf"/>
</dbReference>
<dbReference type="PANTHER" id="PTHR22978">
    <property type="entry name" value="B-CELL TRANSLOCATION GENE"/>
    <property type="match status" value="1"/>
</dbReference>
<dbReference type="PANTHER" id="PTHR22978:SF5">
    <property type="entry name" value="PROTEIN BTG4"/>
    <property type="match status" value="1"/>
</dbReference>
<dbReference type="Pfam" id="PF07742">
    <property type="entry name" value="BTG"/>
    <property type="match status" value="1"/>
</dbReference>
<dbReference type="PRINTS" id="PR00310">
    <property type="entry name" value="ANTIPRLFBTG1"/>
</dbReference>
<dbReference type="SMART" id="SM00099">
    <property type="entry name" value="btg1"/>
    <property type="match status" value="1"/>
</dbReference>
<dbReference type="SUPFAM" id="SSF160696">
    <property type="entry name" value="BTG domain-like"/>
    <property type="match status" value="1"/>
</dbReference>
<dbReference type="PROSITE" id="PS00960">
    <property type="entry name" value="BTG_1"/>
    <property type="match status" value="1"/>
</dbReference>
<dbReference type="PROSITE" id="PS01203">
    <property type="entry name" value="BTG_2"/>
    <property type="match status" value="1"/>
</dbReference>
<name>B915_XENLA</name>
<keyword id="KW-1185">Reference proteome</keyword>
<proteinExistence type="evidence at transcript level"/>
<sequence>MKEEIAATVVFLTMLVKKHKQLSKQKIEKFAAKLTTLLFAKYKTHWYAENPTKGQAFRCIRINECQALDAVLEKACTESNVDFNELGLPKEMTIWVDPFEVCCRYGEKNDPFTIASFKGKDGYNAPKRISNAVEKATSDYHSGTSSDEEPTNKEPKTIPKVSNPNSIYQCADYTQAIPSWSQYPRRKNYQNDGYPHQPMPYYPQQKPYKAFRRSASTFSGPRVDRYHWVNMKR</sequence>